<sequence>MAFPHLQQPSFLLASLKADSINKPFAQRCQDLVKVIEDFPAKELHAVFPWLVESIFGSLDGVLVGWNLRCLQGRVNPVEYSTAMEFLDPSGPMMKLVYKLQAEDYNFDFPVSCLPGPVKASIQENVLPDSPLYHNKVQFPPTGGLGLNLALNPFEYYMFYFALSLISQKPMSMTLHVRTSDCAYFTLVDRYLSWFLPTEGSVPPPLCSSPGGSSPSPAPRTPAMPFASYGLHTSLLKRHISHQTSVNADPASHEIWRSETLLQVFVEMWLHHYSLEMYQKMQSPHAKLEVLHYRLTVSSALHSPAQPSLQALHAYQESFTPTEEHVLVVRLLLKHLHAFANSLKPDQASPSAHSHATSPLEEFKRAAVPRFVQQKLYVFLQHCFGHWPLDATFRAVLEMWLSYLQPWRYAPEKQAQGSDPQPRCVSEKWAPFIQENLLMYTKLFVSFLNRALRTDLVSPKNALMVFRVAKVFAQPNLAEMIQKGEQLFLEPELIIPHRQHRLFTVTTSFLSPWPPVVTDASFKVKSHVYSLEGQDCKYTPMFGPEIRTLVLRLAQLITQAKQTAKSISDQYVESPTGRSFLSWLTFGLTDTNSCYPANDLDEIGQDSIRKTDEYLEKALEYLRQIFRLSEAQLAQLTLALGSARDENGKQQLPDCIVGEEGLILTPLGRYQIINGLRRFEIEYQGDLELQPIRSYEITSLVRALFRLSSAINRRFAGQMAALCSRNDFLGSFCRYHLTEPALSNRHLLSPVGRRQVTNPARGPRLSLRFLGSYRTLLLLLMAFFVASLFCIGPLSCSLLLVLGYVLYAIAMTLLTERGKLHQL</sequence>
<name>NSMA3_MOUSE</name>
<reference key="1">
    <citation type="journal article" date="2003" name="DNA Res.">
        <title>Prediction of the coding sequences of mouse homologues of KIAA gene: III. The complete nucleotide sequences of 500 mouse KIAA-homologous cDNAs identified by screening of terminal sequences of cDNA clones randomly sampled from size-fractionated libraries.</title>
        <authorList>
            <person name="Okazaki N."/>
            <person name="Kikuno R."/>
            <person name="Ohara R."/>
            <person name="Inamoto S."/>
            <person name="Koseki H."/>
            <person name="Hiraoka S."/>
            <person name="Saga Y."/>
            <person name="Nagase T."/>
            <person name="Ohara O."/>
            <person name="Koga H."/>
        </authorList>
    </citation>
    <scope>NUCLEOTIDE SEQUENCE [LARGE SCALE MRNA] (ISOFORM 1)</scope>
    <source>
        <tissue>Embryonic tail</tissue>
    </source>
</reference>
<reference key="2">
    <citation type="journal article" date="2005" name="Science">
        <title>The transcriptional landscape of the mammalian genome.</title>
        <authorList>
            <person name="Carninci P."/>
            <person name="Kasukawa T."/>
            <person name="Katayama S."/>
            <person name="Gough J."/>
            <person name="Frith M.C."/>
            <person name="Maeda N."/>
            <person name="Oyama R."/>
            <person name="Ravasi T."/>
            <person name="Lenhard B."/>
            <person name="Wells C."/>
            <person name="Kodzius R."/>
            <person name="Shimokawa K."/>
            <person name="Bajic V.B."/>
            <person name="Brenner S.E."/>
            <person name="Batalov S."/>
            <person name="Forrest A.R."/>
            <person name="Zavolan M."/>
            <person name="Davis M.J."/>
            <person name="Wilming L.G."/>
            <person name="Aidinis V."/>
            <person name="Allen J.E."/>
            <person name="Ambesi-Impiombato A."/>
            <person name="Apweiler R."/>
            <person name="Aturaliya R.N."/>
            <person name="Bailey T.L."/>
            <person name="Bansal M."/>
            <person name="Baxter L."/>
            <person name="Beisel K.W."/>
            <person name="Bersano T."/>
            <person name="Bono H."/>
            <person name="Chalk A.M."/>
            <person name="Chiu K.P."/>
            <person name="Choudhary V."/>
            <person name="Christoffels A."/>
            <person name="Clutterbuck D.R."/>
            <person name="Crowe M.L."/>
            <person name="Dalla E."/>
            <person name="Dalrymple B.P."/>
            <person name="de Bono B."/>
            <person name="Della Gatta G."/>
            <person name="di Bernardo D."/>
            <person name="Down T."/>
            <person name="Engstrom P."/>
            <person name="Fagiolini M."/>
            <person name="Faulkner G."/>
            <person name="Fletcher C.F."/>
            <person name="Fukushima T."/>
            <person name="Furuno M."/>
            <person name="Futaki S."/>
            <person name="Gariboldi M."/>
            <person name="Georgii-Hemming P."/>
            <person name="Gingeras T.R."/>
            <person name="Gojobori T."/>
            <person name="Green R.E."/>
            <person name="Gustincich S."/>
            <person name="Harbers M."/>
            <person name="Hayashi Y."/>
            <person name="Hensch T.K."/>
            <person name="Hirokawa N."/>
            <person name="Hill D."/>
            <person name="Huminiecki L."/>
            <person name="Iacono M."/>
            <person name="Ikeo K."/>
            <person name="Iwama A."/>
            <person name="Ishikawa T."/>
            <person name="Jakt M."/>
            <person name="Kanapin A."/>
            <person name="Katoh M."/>
            <person name="Kawasawa Y."/>
            <person name="Kelso J."/>
            <person name="Kitamura H."/>
            <person name="Kitano H."/>
            <person name="Kollias G."/>
            <person name="Krishnan S.P."/>
            <person name="Kruger A."/>
            <person name="Kummerfeld S.K."/>
            <person name="Kurochkin I.V."/>
            <person name="Lareau L.F."/>
            <person name="Lazarevic D."/>
            <person name="Lipovich L."/>
            <person name="Liu J."/>
            <person name="Liuni S."/>
            <person name="McWilliam S."/>
            <person name="Madan Babu M."/>
            <person name="Madera M."/>
            <person name="Marchionni L."/>
            <person name="Matsuda H."/>
            <person name="Matsuzawa S."/>
            <person name="Miki H."/>
            <person name="Mignone F."/>
            <person name="Miyake S."/>
            <person name="Morris K."/>
            <person name="Mottagui-Tabar S."/>
            <person name="Mulder N."/>
            <person name="Nakano N."/>
            <person name="Nakauchi H."/>
            <person name="Ng P."/>
            <person name="Nilsson R."/>
            <person name="Nishiguchi S."/>
            <person name="Nishikawa S."/>
            <person name="Nori F."/>
            <person name="Ohara O."/>
            <person name="Okazaki Y."/>
            <person name="Orlando V."/>
            <person name="Pang K.C."/>
            <person name="Pavan W.J."/>
            <person name="Pavesi G."/>
            <person name="Pesole G."/>
            <person name="Petrovsky N."/>
            <person name="Piazza S."/>
            <person name="Reed J."/>
            <person name="Reid J.F."/>
            <person name="Ring B.Z."/>
            <person name="Ringwald M."/>
            <person name="Rost B."/>
            <person name="Ruan Y."/>
            <person name="Salzberg S.L."/>
            <person name="Sandelin A."/>
            <person name="Schneider C."/>
            <person name="Schoenbach C."/>
            <person name="Sekiguchi K."/>
            <person name="Semple C.A."/>
            <person name="Seno S."/>
            <person name="Sessa L."/>
            <person name="Sheng Y."/>
            <person name="Shibata Y."/>
            <person name="Shimada H."/>
            <person name="Shimada K."/>
            <person name="Silva D."/>
            <person name="Sinclair B."/>
            <person name="Sperling S."/>
            <person name="Stupka E."/>
            <person name="Sugiura K."/>
            <person name="Sultana R."/>
            <person name="Takenaka Y."/>
            <person name="Taki K."/>
            <person name="Tammoja K."/>
            <person name="Tan S.L."/>
            <person name="Tang S."/>
            <person name="Taylor M.S."/>
            <person name="Tegner J."/>
            <person name="Teichmann S.A."/>
            <person name="Ueda H.R."/>
            <person name="van Nimwegen E."/>
            <person name="Verardo R."/>
            <person name="Wei C.L."/>
            <person name="Yagi K."/>
            <person name="Yamanishi H."/>
            <person name="Zabarovsky E."/>
            <person name="Zhu S."/>
            <person name="Zimmer A."/>
            <person name="Hide W."/>
            <person name="Bult C."/>
            <person name="Grimmond S.M."/>
            <person name="Teasdale R.D."/>
            <person name="Liu E.T."/>
            <person name="Brusic V."/>
            <person name="Quackenbush J."/>
            <person name="Wahlestedt C."/>
            <person name="Mattick J.S."/>
            <person name="Hume D.A."/>
            <person name="Kai C."/>
            <person name="Sasaki D."/>
            <person name="Tomaru Y."/>
            <person name="Fukuda S."/>
            <person name="Kanamori-Katayama M."/>
            <person name="Suzuki M."/>
            <person name="Aoki J."/>
            <person name="Arakawa T."/>
            <person name="Iida J."/>
            <person name="Imamura K."/>
            <person name="Itoh M."/>
            <person name="Kato T."/>
            <person name="Kawaji H."/>
            <person name="Kawagashira N."/>
            <person name="Kawashima T."/>
            <person name="Kojima M."/>
            <person name="Kondo S."/>
            <person name="Konno H."/>
            <person name="Nakano K."/>
            <person name="Ninomiya N."/>
            <person name="Nishio T."/>
            <person name="Okada M."/>
            <person name="Plessy C."/>
            <person name="Shibata K."/>
            <person name="Shiraki T."/>
            <person name="Suzuki S."/>
            <person name="Tagami M."/>
            <person name="Waki K."/>
            <person name="Watahiki A."/>
            <person name="Okamura-Oho Y."/>
            <person name="Suzuki H."/>
            <person name="Kawai J."/>
            <person name="Hayashizaki Y."/>
        </authorList>
    </citation>
    <scope>NUCLEOTIDE SEQUENCE [LARGE SCALE MRNA] (ISOFORMS 2; 3; 4 AND 5)</scope>
    <source>
        <strain>C57BL/6J</strain>
        <tissue>Cerebellum</tissue>
        <tissue>Head</tissue>
        <tissue>Testis</tissue>
        <tissue>Thymus</tissue>
    </source>
</reference>
<reference key="3">
    <citation type="journal article" date="2004" name="Genome Res.">
        <title>The status, quality, and expansion of the NIH full-length cDNA project: the Mammalian Gene Collection (MGC).</title>
        <authorList>
            <consortium name="The MGC Project Team"/>
        </authorList>
    </citation>
    <scope>NUCLEOTIDE SEQUENCE [LARGE SCALE MRNA] (ISOFORM 2)</scope>
    <source>
        <strain>FVB/N</strain>
        <tissue>Liver</tissue>
    </source>
</reference>
<reference key="4">
    <citation type="journal article" date="2010" name="Cell">
        <title>A tissue-specific atlas of mouse protein phosphorylation and expression.</title>
        <authorList>
            <person name="Huttlin E.L."/>
            <person name="Jedrychowski M.P."/>
            <person name="Elias J.E."/>
            <person name="Goswami T."/>
            <person name="Rad R."/>
            <person name="Beausoleil S.A."/>
            <person name="Villen J."/>
            <person name="Haas W."/>
            <person name="Sowa M.E."/>
            <person name="Gygi S.P."/>
        </authorList>
    </citation>
    <scope>PHOSPHORYLATION [LARGE SCALE ANALYSIS] AT SER-245</scope>
    <scope>IDENTIFICATION BY MASS SPECTROMETRY [LARGE SCALE ANALYSIS]</scope>
    <source>
        <tissue>Brown adipose tissue</tissue>
        <tissue>Kidney</tissue>
        <tissue>Spleen</tissue>
        <tissue>Testis</tissue>
    </source>
</reference>
<reference key="5">
    <citation type="journal article" date="2014" name="Redox Biol.">
        <title>Neutral sphingomyelinase-3 mediates TNF-stimulated oxidant activity in skeletal muscle.</title>
        <authorList>
            <person name="Moylan J.S."/>
            <person name="Smith J.D."/>
            <person name="Wolf Horrell E.M."/>
            <person name="McLean J.B."/>
            <person name="Deevska G.M."/>
            <person name="Bonnell M.R."/>
            <person name="Nikolova-Karakashian M.N."/>
            <person name="Reid M.B."/>
        </authorList>
    </citation>
    <scope>FUNCTION</scope>
    <scope>SUBCELLULAR LOCATION</scope>
    <scope>TISSUE SPECIFICITY</scope>
    <scope>ALTERNATIVE SPLICING</scope>
    <scope>CATALYTIC ACTIVITY</scope>
    <scope>ACTIVITY REGULATION</scope>
    <scope>COFACTOR</scope>
</reference>
<reference key="6">
    <citation type="journal article" date="2019" name="Nucleus">
        <title>Identification of new transmembrane proteins concentrated at the nuclear envelope using organellar proteomics of mesenchymal cells.</title>
        <authorList>
            <person name="Cheng L.C."/>
            <person name="Baboo S."/>
            <person name="Lindsay C."/>
            <person name="Brusman L."/>
            <person name="Martinez-Bartolome S."/>
            <person name="Tapia O."/>
            <person name="Zhang X."/>
            <person name="Yates J.R. III"/>
            <person name="Gerace L."/>
        </authorList>
    </citation>
    <scope>IDENTIFICATION BY MASS SPECTROMETRY</scope>
    <scope>SUBCELLULAR LOCATION</scope>
</reference>
<comment type="function">
    <text evidence="1 3">Catalyzes the hydrolysis of membrane sphingomyelin to form phosphorylcholine and ceramide (PubMed:25180167). It has a relevant role in the homeostasis of membrane sphingolipids, thereby influencing membrane integrity, and endoplasmic reticulum organization and function. May sensitize cells to DNA damage-induced apoptosis. In skeletal muscle, mediates TNF-stimulated oxidant production (PubMed:25180167).</text>
</comment>
<comment type="catalytic activity">
    <molecule>Isoform 1</molecule>
    <reaction evidence="3">
        <text>a sphingomyelin + H2O = phosphocholine + an N-acylsphing-4-enine + H(+)</text>
        <dbReference type="Rhea" id="RHEA:19253"/>
        <dbReference type="ChEBI" id="CHEBI:15377"/>
        <dbReference type="ChEBI" id="CHEBI:15378"/>
        <dbReference type="ChEBI" id="CHEBI:17636"/>
        <dbReference type="ChEBI" id="CHEBI:52639"/>
        <dbReference type="ChEBI" id="CHEBI:295975"/>
        <dbReference type="EC" id="3.1.4.12"/>
    </reaction>
    <physiologicalReaction direction="left-to-right" evidence="9">
        <dbReference type="Rhea" id="RHEA:19254"/>
    </physiologicalReaction>
</comment>
<comment type="cofactor">
    <cofactor evidence="3">
        <name>Mg(2+)</name>
        <dbReference type="ChEBI" id="CHEBI:18420"/>
    </cofactor>
</comment>
<comment type="activity regulation">
    <text evidence="1 3">Activated by phosphatidylserine and tumor necrosis factor (TNF) (PubMed:25180167). Inhibited by scyphostatin (By similarity).</text>
</comment>
<comment type="subcellular location">
    <subcellularLocation>
        <location evidence="3">Endoplasmic reticulum membrane</location>
        <topology evidence="2">Single-pass membrane protein</topology>
    </subcellularLocation>
    <subcellularLocation>
        <location evidence="1">Golgi apparatus membrane</location>
        <topology evidence="2">Single-pass membrane protein</topology>
    </subcellularLocation>
    <subcellularLocation>
        <location evidence="4">Nucleus envelope</location>
    </subcellularLocation>
    <subcellularLocation>
        <location evidence="3">Cell membrane</location>
        <location evidence="3">Sarcolemma</location>
    </subcellularLocation>
</comment>
<comment type="alternative products">
    <event type="alternative splicing"/>
    <isoform>
        <id>Q6ZPR5-1</id>
        <name>1</name>
        <name evidence="7">nSMase3a</name>
        <sequence type="displayed"/>
    </isoform>
    <isoform>
        <id>Q6ZPR5-2</id>
        <name>2</name>
        <name evidence="7">nSMase3b</name>
        <sequence type="described" ref="VSP_022485"/>
    </isoform>
    <isoform>
        <id>Q6ZPR5-3</id>
        <name>3</name>
        <sequence type="described" ref="VSP_022485 VSP_022486"/>
    </isoform>
    <isoform>
        <id>Q6ZPR5-4</id>
        <name>4</name>
        <sequence type="described" ref="VSP_022485 VSP_022487"/>
    </isoform>
    <isoform>
        <id>Q6ZPR5-5</id>
        <name>5</name>
        <sequence type="described" ref="VSP_022484 VSP_022485"/>
    </isoform>
</comment>
<comment type="tissue specificity">
    <molecule>Isoform 1</molecule>
    <text evidence="3">Expressed in skeletal muscle (at protein level).</text>
</comment>
<comment type="tissue specificity">
    <molecule>Isoform 2</molecule>
    <text evidence="3">Expressed in skeletal muscle but a lower levels than isoform 1 (at protein level).</text>
</comment>
<comment type="sequence caution" evidence="8">
    <conflict type="erroneous initiation">
        <sequence resource="EMBL-CDS" id="BAC98164"/>
    </conflict>
    <text>Extended N-terminus.</text>
</comment>
<proteinExistence type="evidence at protein level"/>
<keyword id="KW-0025">Alternative splicing</keyword>
<keyword id="KW-1003">Cell membrane</keyword>
<keyword id="KW-0256">Endoplasmic reticulum</keyword>
<keyword id="KW-0333">Golgi apparatus</keyword>
<keyword id="KW-0378">Hydrolase</keyword>
<keyword id="KW-0443">Lipid metabolism</keyword>
<keyword id="KW-0460">Magnesium</keyword>
<keyword id="KW-0472">Membrane</keyword>
<keyword id="KW-0479">Metal-binding</keyword>
<keyword id="KW-0539">Nucleus</keyword>
<keyword id="KW-0597">Phosphoprotein</keyword>
<keyword id="KW-1185">Reference proteome</keyword>
<keyword id="KW-0812">Transmembrane</keyword>
<keyword id="KW-1133">Transmembrane helix</keyword>
<evidence type="ECO:0000250" key="1">
    <source>
        <dbReference type="UniProtKB" id="Q9NXE4"/>
    </source>
</evidence>
<evidence type="ECO:0000255" key="2"/>
<evidence type="ECO:0000269" key="3">
    <source>
    </source>
</evidence>
<evidence type="ECO:0000269" key="4">
    <source>
    </source>
</evidence>
<evidence type="ECO:0000303" key="5">
    <source>
    </source>
</evidence>
<evidence type="ECO:0000303" key="6">
    <source>
    </source>
</evidence>
<evidence type="ECO:0000303" key="7">
    <source>
    </source>
</evidence>
<evidence type="ECO:0000305" key="8"/>
<evidence type="ECO:0000305" key="9">
    <source>
    </source>
</evidence>
<evidence type="ECO:0007744" key="10">
    <source>
    </source>
</evidence>
<protein>
    <recommendedName>
        <fullName>Sphingomyelin phosphodiesterase 4</fullName>
        <ecNumber>3.1.4.12</ecNumber>
    </recommendedName>
    <alternativeName>
        <fullName>Neutral sphingomyelinase 3</fullName>
        <shortName>nSMase-3</shortName>
        <shortName evidence="7">nSMase3</shortName>
    </alternativeName>
    <alternativeName>
        <fullName>Neutral sphingomyelinase III</fullName>
    </alternativeName>
</protein>
<feature type="chain" id="PRO_0000273164" description="Sphingomyelin phosphodiesterase 4">
    <location>
        <begin position="1"/>
        <end position="823"/>
    </location>
</feature>
<feature type="transmembrane region" description="Helical" evidence="2">
    <location>
        <begin position="776"/>
        <end position="796"/>
    </location>
</feature>
<feature type="modified residue" description="Phosphoserine" evidence="1">
    <location>
        <position position="130"/>
    </location>
</feature>
<feature type="modified residue" description="Phosphoserine" evidence="10">
    <location>
        <position position="245"/>
    </location>
</feature>
<feature type="modified residue" description="Phosphothreonine" evidence="1">
    <location>
        <position position="665"/>
    </location>
</feature>
<feature type="modified residue" description="Phosphoserine" evidence="1">
    <location>
        <position position="749"/>
    </location>
</feature>
<feature type="splice variant" id="VSP_022484" description="In isoform 5." evidence="6">
    <location>
        <begin position="1"/>
        <end position="157"/>
    </location>
</feature>
<feature type="splice variant" id="VSP_022485" description="In isoform 2, isoform 3, isoform 4 and isoform 5." evidence="5 6">
    <location>
        <begin position="288"/>
        <end position="316"/>
    </location>
</feature>
<feature type="splice variant" id="VSP_022486" description="In isoform 3." evidence="6">
    <location>
        <position position="429"/>
    </location>
</feature>
<feature type="splice variant" id="VSP_022487" description="In isoform 4." evidence="6">
    <original>W</original>
    <variation>CLAPWSPYQHRGLR</variation>
    <location>
        <position position="429"/>
    </location>
</feature>
<feature type="sequence conflict" description="In Ref. 3; AAH26767." evidence="8" ref="3">
    <original>Q</original>
    <variation>P</variation>
    <location>
        <position position="7"/>
    </location>
</feature>
<feature type="sequence conflict" description="In Ref. 2; BAC27221." evidence="8" ref="2">
    <original>S</original>
    <variation>T</variation>
    <location>
        <position position="15"/>
    </location>
</feature>
<feature type="sequence conflict" description="In Ref. 2; BAC27512." evidence="8" ref="2">
    <original>P</original>
    <variation>T</variation>
    <location>
        <position position="141"/>
    </location>
</feature>
<feature type="sequence conflict" description="In Ref. 3; AAH26767." evidence="8" ref="3">
    <original>F</original>
    <variation>V</variation>
    <location>
        <position position="195"/>
    </location>
</feature>
<feature type="sequence conflict" description="In Ref. 2; BAB31737." evidence="8" ref="2">
    <original>V</original>
    <variation>E</variation>
    <location>
        <position position="368"/>
    </location>
</feature>
<feature type="sequence conflict" description="In Ref. 2; BAC27221." evidence="8" ref="2">
    <original>F</original>
    <variation>Y</variation>
    <location>
        <position position="732"/>
    </location>
</feature>
<dbReference type="EC" id="3.1.4.12"/>
<dbReference type="EMBL" id="AK129354">
    <property type="protein sequence ID" value="BAC98164.1"/>
    <property type="status" value="ALT_INIT"/>
    <property type="molecule type" value="mRNA"/>
</dbReference>
<dbReference type="EMBL" id="AK019466">
    <property type="protein sequence ID" value="BAB31737.1"/>
    <property type="molecule type" value="mRNA"/>
</dbReference>
<dbReference type="EMBL" id="AK031029">
    <property type="protein sequence ID" value="BAC27221.1"/>
    <property type="molecule type" value="mRNA"/>
</dbReference>
<dbReference type="EMBL" id="AK031685">
    <property type="protein sequence ID" value="BAC27512.1"/>
    <property type="molecule type" value="mRNA"/>
</dbReference>
<dbReference type="EMBL" id="AK035892">
    <property type="protein sequence ID" value="BAC29229.1"/>
    <property type="molecule type" value="mRNA"/>
</dbReference>
<dbReference type="EMBL" id="AK164234">
    <property type="protein sequence ID" value="BAE37694.1"/>
    <property type="molecule type" value="mRNA"/>
</dbReference>
<dbReference type="EMBL" id="AK164456">
    <property type="protein sequence ID" value="BAE37796.1"/>
    <property type="molecule type" value="mRNA"/>
</dbReference>
<dbReference type="EMBL" id="BC026767">
    <property type="protein sequence ID" value="AAH26767.1"/>
    <property type="molecule type" value="mRNA"/>
</dbReference>
<dbReference type="CCDS" id="CCDS28009.1">
    <molecule id="Q6ZPR5-1"/>
</dbReference>
<dbReference type="CCDS" id="CCDS49779.1">
    <molecule id="Q6ZPR5-3"/>
</dbReference>
<dbReference type="CCDS" id="CCDS49780.1">
    <molecule id="Q6ZPR5-4"/>
</dbReference>
<dbReference type="CCDS" id="CCDS49781.1">
    <molecule id="Q6ZPR5-2"/>
</dbReference>
<dbReference type="RefSeq" id="NP_001158081.1">
    <molecule id="Q6ZPR5-4"/>
    <property type="nucleotide sequence ID" value="NM_001164609.2"/>
</dbReference>
<dbReference type="RefSeq" id="NP_001158082.1">
    <molecule id="Q6ZPR5-2"/>
    <property type="nucleotide sequence ID" value="NM_001164610.2"/>
</dbReference>
<dbReference type="RefSeq" id="NP_001158083.1">
    <molecule id="Q6ZPR5-3"/>
    <property type="nucleotide sequence ID" value="NM_001164611.2"/>
</dbReference>
<dbReference type="RefSeq" id="NP_001390351.1">
    <molecule id="Q6ZPR5-2"/>
    <property type="nucleotide sequence ID" value="NM_001403422.1"/>
</dbReference>
<dbReference type="RefSeq" id="NP_084221.2">
    <molecule id="Q6ZPR5-1"/>
    <property type="nucleotide sequence ID" value="NM_029945.4"/>
</dbReference>
<dbReference type="RefSeq" id="XP_006522785.1">
    <molecule id="Q6ZPR5-1"/>
    <property type="nucleotide sequence ID" value="XM_006522722.3"/>
</dbReference>
<dbReference type="RefSeq" id="XP_036016072.1">
    <molecule id="Q6ZPR5-1"/>
    <property type="nucleotide sequence ID" value="XM_036160179.1"/>
</dbReference>
<dbReference type="BioGRID" id="218808">
    <property type="interactions" value="3"/>
</dbReference>
<dbReference type="FunCoup" id="Q6ZPR5">
    <property type="interactions" value="3571"/>
</dbReference>
<dbReference type="IntAct" id="Q6ZPR5">
    <property type="interactions" value="2"/>
</dbReference>
<dbReference type="STRING" id="10090.ENSMUSP00000006053"/>
<dbReference type="SwissLipids" id="SLP:000001481">
    <molecule id="Q6ZPR5-1"/>
</dbReference>
<dbReference type="iPTMnet" id="Q6ZPR5"/>
<dbReference type="PhosphoSitePlus" id="Q6ZPR5"/>
<dbReference type="SwissPalm" id="Q6ZPR5"/>
<dbReference type="PaxDb" id="10090-ENSMUSP00000006053"/>
<dbReference type="PeptideAtlas" id="Q6ZPR5"/>
<dbReference type="ProteomicsDB" id="253024">
    <molecule id="Q6ZPR5-1"/>
</dbReference>
<dbReference type="ProteomicsDB" id="253025">
    <molecule id="Q6ZPR5-2"/>
</dbReference>
<dbReference type="ProteomicsDB" id="253026">
    <molecule id="Q6ZPR5-3"/>
</dbReference>
<dbReference type="ProteomicsDB" id="253027">
    <molecule id="Q6ZPR5-4"/>
</dbReference>
<dbReference type="ProteomicsDB" id="253028">
    <molecule id="Q6ZPR5-5"/>
</dbReference>
<dbReference type="Pumba" id="Q6ZPR5"/>
<dbReference type="Antibodypedia" id="56085">
    <property type="antibodies" value="84 antibodies from 20 providers"/>
</dbReference>
<dbReference type="DNASU" id="77626"/>
<dbReference type="Ensembl" id="ENSMUST00000006053.13">
    <molecule id="Q6ZPR5-1"/>
    <property type="protein sequence ID" value="ENSMUSP00000006053.7"/>
    <property type="gene ID" value="ENSMUSG00000005899.15"/>
</dbReference>
<dbReference type="Ensembl" id="ENSMUST00000090159.13">
    <molecule id="Q6ZPR5-4"/>
    <property type="protein sequence ID" value="ENSMUSP00000087620.5"/>
    <property type="gene ID" value="ENSMUSG00000005899.15"/>
</dbReference>
<dbReference type="Ensembl" id="ENSMUST00000163476.10">
    <molecule id="Q6ZPR5-2"/>
    <property type="protein sequence ID" value="ENSMUSP00000131867.2"/>
    <property type="gene ID" value="ENSMUSG00000005899.15"/>
</dbReference>
<dbReference type="Ensembl" id="ENSMUST00000165363.10">
    <molecule id="Q6ZPR5-3"/>
    <property type="protein sequence ID" value="ENSMUSP00000130720.2"/>
    <property type="gene ID" value="ENSMUSG00000005899.15"/>
</dbReference>
<dbReference type="GeneID" id="77626"/>
<dbReference type="KEGG" id="mmu:77626"/>
<dbReference type="UCSC" id="uc007yll.2">
    <molecule id="Q6ZPR5-1"/>
    <property type="organism name" value="mouse"/>
</dbReference>
<dbReference type="UCSC" id="uc007ylm.2">
    <molecule id="Q6ZPR5-3"/>
    <property type="organism name" value="mouse"/>
</dbReference>
<dbReference type="UCSC" id="uc007yln.2">
    <molecule id="Q6ZPR5-4"/>
    <property type="organism name" value="mouse"/>
</dbReference>
<dbReference type="UCSC" id="uc007ylo.2">
    <molecule id="Q6ZPR5-2"/>
    <property type="organism name" value="mouse"/>
</dbReference>
<dbReference type="UCSC" id="uc007ylp.2">
    <molecule id="Q6ZPR5-5"/>
    <property type="organism name" value="mouse"/>
</dbReference>
<dbReference type="AGR" id="MGI:1924876"/>
<dbReference type="CTD" id="55627"/>
<dbReference type="MGI" id="MGI:1924876">
    <property type="gene designation" value="Smpd4"/>
</dbReference>
<dbReference type="VEuPathDB" id="HostDB:ENSMUSG00000005899"/>
<dbReference type="eggNOG" id="KOG4396">
    <property type="taxonomic scope" value="Eukaryota"/>
</dbReference>
<dbReference type="GeneTree" id="ENSGT00390000006044"/>
<dbReference type="HOGENOM" id="CLU_012098_0_0_1"/>
<dbReference type="InParanoid" id="Q6ZPR5"/>
<dbReference type="OMA" id="EERGKIH"/>
<dbReference type="OrthoDB" id="10251508at2759"/>
<dbReference type="PhylomeDB" id="Q6ZPR5"/>
<dbReference type="TreeFam" id="TF324409"/>
<dbReference type="Reactome" id="R-MMU-9840310">
    <property type="pathway name" value="Glycosphingolipid catabolism"/>
</dbReference>
<dbReference type="BioGRID-ORCS" id="77626">
    <property type="hits" value="4 hits in 79 CRISPR screens"/>
</dbReference>
<dbReference type="ChiTaRS" id="Smpd4">
    <property type="organism name" value="mouse"/>
</dbReference>
<dbReference type="PRO" id="PR:Q6ZPR5"/>
<dbReference type="Proteomes" id="UP000000589">
    <property type="component" value="Chromosome 16"/>
</dbReference>
<dbReference type="RNAct" id="Q6ZPR5">
    <property type="molecule type" value="protein"/>
</dbReference>
<dbReference type="Bgee" id="ENSMUSG00000005899">
    <property type="expression patterns" value="Expressed in embryonic post-anal tail and 259 other cell types or tissues"/>
</dbReference>
<dbReference type="ExpressionAtlas" id="Q6ZPR5">
    <property type="expression patterns" value="baseline and differential"/>
</dbReference>
<dbReference type="GO" id="GO:0005783">
    <property type="term" value="C:endoplasmic reticulum"/>
    <property type="evidence" value="ECO:0000314"/>
    <property type="project" value="UniProtKB"/>
</dbReference>
<dbReference type="GO" id="GO:0005789">
    <property type="term" value="C:endoplasmic reticulum membrane"/>
    <property type="evidence" value="ECO:0007669"/>
    <property type="project" value="UniProtKB-SubCell"/>
</dbReference>
<dbReference type="GO" id="GO:0005794">
    <property type="term" value="C:Golgi apparatus"/>
    <property type="evidence" value="ECO:0000250"/>
    <property type="project" value="HGNC-UCL"/>
</dbReference>
<dbReference type="GO" id="GO:0000139">
    <property type="term" value="C:Golgi membrane"/>
    <property type="evidence" value="ECO:0007669"/>
    <property type="project" value="UniProtKB-SubCell"/>
</dbReference>
<dbReference type="GO" id="GO:0005635">
    <property type="term" value="C:nuclear envelope"/>
    <property type="evidence" value="ECO:0000314"/>
    <property type="project" value="UniProtKB"/>
</dbReference>
<dbReference type="GO" id="GO:0042383">
    <property type="term" value="C:sarcolemma"/>
    <property type="evidence" value="ECO:0000314"/>
    <property type="project" value="UniProtKB"/>
</dbReference>
<dbReference type="GO" id="GO:0005802">
    <property type="term" value="C:trans-Golgi network"/>
    <property type="evidence" value="ECO:0000250"/>
    <property type="project" value="HGNC-UCL"/>
</dbReference>
<dbReference type="GO" id="GO:0046872">
    <property type="term" value="F:metal ion binding"/>
    <property type="evidence" value="ECO:0007669"/>
    <property type="project" value="UniProtKB-KW"/>
</dbReference>
<dbReference type="GO" id="GO:0004767">
    <property type="term" value="F:sphingomyelin phosphodiesterase activity"/>
    <property type="evidence" value="ECO:0000314"/>
    <property type="project" value="UniProtKB"/>
</dbReference>
<dbReference type="GO" id="GO:0050290">
    <property type="term" value="F:sphingomyelin phosphodiesterase D activity"/>
    <property type="evidence" value="ECO:0000250"/>
    <property type="project" value="HGNC-UCL"/>
</dbReference>
<dbReference type="GO" id="GO:0071356">
    <property type="term" value="P:cellular response to tumor necrosis factor"/>
    <property type="evidence" value="ECO:0000314"/>
    <property type="project" value="UniProtKB"/>
</dbReference>
<dbReference type="GO" id="GO:0046513">
    <property type="term" value="P:ceramide biosynthetic process"/>
    <property type="evidence" value="ECO:0000314"/>
    <property type="project" value="UniProtKB"/>
</dbReference>
<dbReference type="GO" id="GO:0001701">
    <property type="term" value="P:in utero embryonic development"/>
    <property type="evidence" value="ECO:0000315"/>
    <property type="project" value="MGI"/>
</dbReference>
<dbReference type="GO" id="GO:0006685">
    <property type="term" value="P:sphingomyelin catabolic process"/>
    <property type="evidence" value="ECO:0000314"/>
    <property type="project" value="UniProtKB"/>
</dbReference>
<dbReference type="InterPro" id="IPR024129">
    <property type="entry name" value="Sphingomy_SMPD4"/>
</dbReference>
<dbReference type="PANTHER" id="PTHR12988">
    <property type="entry name" value="SPHINGOMYELIN PHOSPHODIESTERASE 4"/>
    <property type="match status" value="1"/>
</dbReference>
<dbReference type="PANTHER" id="PTHR12988:SF6">
    <property type="entry name" value="SPHINGOMYELIN PHOSPHODIESTERASE 4"/>
    <property type="match status" value="1"/>
</dbReference>
<dbReference type="Pfam" id="PF14724">
    <property type="entry name" value="mit_SMPDase"/>
    <property type="match status" value="1"/>
</dbReference>
<organism>
    <name type="scientific">Mus musculus</name>
    <name type="common">Mouse</name>
    <dbReference type="NCBI Taxonomy" id="10090"/>
    <lineage>
        <taxon>Eukaryota</taxon>
        <taxon>Metazoa</taxon>
        <taxon>Chordata</taxon>
        <taxon>Craniata</taxon>
        <taxon>Vertebrata</taxon>
        <taxon>Euteleostomi</taxon>
        <taxon>Mammalia</taxon>
        <taxon>Eutheria</taxon>
        <taxon>Euarchontoglires</taxon>
        <taxon>Glires</taxon>
        <taxon>Rodentia</taxon>
        <taxon>Myomorpha</taxon>
        <taxon>Muroidea</taxon>
        <taxon>Muridae</taxon>
        <taxon>Murinae</taxon>
        <taxon>Mus</taxon>
        <taxon>Mus</taxon>
    </lineage>
</organism>
<accession>Q6ZPR5</accession>
<accession>Q3TPE0</accession>
<accession>Q3TPP1</accession>
<accession>Q8CBJ5</accession>
<accession>Q8CD12</accession>
<accession>Q8CD83</accession>
<accession>Q8R0J3</accession>
<accession>Q9CX74</accession>
<gene>
    <name type="primary">Smpd4</name>
    <name type="synonym">Kiaa1418</name>
</gene>